<organism>
    <name type="scientific">Lycodes reticulatus</name>
    <name type="common">Arctic eelpout</name>
    <dbReference type="NCBI Taxonomy" id="215418"/>
    <lineage>
        <taxon>Eukaryota</taxon>
        <taxon>Metazoa</taxon>
        <taxon>Chordata</taxon>
        <taxon>Craniata</taxon>
        <taxon>Vertebrata</taxon>
        <taxon>Euteleostomi</taxon>
        <taxon>Actinopterygii</taxon>
        <taxon>Neopterygii</taxon>
        <taxon>Teleostei</taxon>
        <taxon>Neoteleostei</taxon>
        <taxon>Acanthomorphata</taxon>
        <taxon>Eupercaria</taxon>
        <taxon>Perciformes</taxon>
        <taxon>Cottioidei</taxon>
        <taxon>Zoarcales</taxon>
        <taxon>Zoarcidae</taxon>
        <taxon>Lycodinae</taxon>
        <taxon>Lycodes</taxon>
    </lineage>
</organism>
<evidence type="ECO:0000250" key="1">
    <source>
        <dbReference type="UniProtKB" id="P56250"/>
    </source>
</evidence>
<evidence type="ECO:0000255" key="2">
    <source>
        <dbReference type="PROSITE-ProRule" id="PRU00238"/>
    </source>
</evidence>
<evidence type="ECO:0000269" key="3">
    <source>
    </source>
</evidence>
<evidence type="ECO:0000303" key="4">
    <source>
    </source>
</evidence>
<evidence type="ECO:0000305" key="5"/>
<gene>
    <name evidence="1" type="primary">hba</name>
</gene>
<sequence length="142" mass="15622">SLSDKDKAAVKAIWNKISKSADVIGADAMGRMLVVYPQTKTYFSHWSDLSPNSAPVKNHGKTVMTGVALAVSNIDDMTTGLKALSEKHAFQLRVDPSNFKILSHCILVVIAMMYPKDFTPEAHVSMDKFFCGLSLALAEKYR</sequence>
<accession>P86882</accession>
<feature type="chain" id="PRO_0000419015" description="Hemoglobin subunit alpha">
    <location>
        <begin position="1"/>
        <end position="142"/>
    </location>
</feature>
<feature type="domain" description="Globin" evidence="2">
    <location>
        <begin position="1"/>
        <end position="142"/>
    </location>
</feature>
<feature type="binding site" description="distal binding residue" evidence="1 2">
    <location>
        <position position="59"/>
    </location>
    <ligand>
        <name>heme b</name>
        <dbReference type="ChEBI" id="CHEBI:60344"/>
    </ligand>
    <ligandPart>
        <name>Fe</name>
        <dbReference type="ChEBI" id="CHEBI:18248"/>
    </ligandPart>
</feature>
<feature type="binding site" description="proximal binding residue" evidence="1 2">
    <location>
        <position position="88"/>
    </location>
    <ligand>
        <name>heme b</name>
        <dbReference type="ChEBI" id="CHEBI:60344"/>
    </ligand>
    <ligandPart>
        <name>Fe</name>
        <dbReference type="ChEBI" id="CHEBI:18248"/>
    </ligandPart>
</feature>
<feature type="modified residue" description="N-acetylserine" evidence="3">
    <location>
        <position position="1"/>
    </location>
</feature>
<reference evidence="5" key="1">
    <citation type="journal article" date="2011" name="IUBMB Life">
        <title>Polymerization of hemoglobins in Arctic fish: Lycodes reticulatus and Gadus morhua.</title>
        <authorList>
            <person name="Riccio A."/>
            <person name="Mangiapia G."/>
            <person name="Giordano D."/>
            <person name="Flagiello A."/>
            <person name="Tedesco R."/>
            <person name="Bruno S."/>
            <person name="Vergara A."/>
            <person name="Mazzarella L."/>
            <person name="di Prisco G."/>
            <person name="Pucci P."/>
            <person name="Paduano L."/>
            <person name="Verde C."/>
        </authorList>
    </citation>
    <scope>PROTEIN SEQUENCE</scope>
    <scope>FUNCTION</scope>
    <scope>SUBUNIT</scope>
    <scope>MASS SPECTROMETRY</scope>
    <scope>ACETYLATION AT SER-1</scope>
    <source>
        <tissue evidence="3">Blood</tissue>
    </source>
</reference>
<protein>
    <recommendedName>
        <fullName evidence="4">Hemoglobin subunit alpha</fullName>
    </recommendedName>
    <alternativeName>
        <fullName evidence="1">Alpha-globin</fullName>
    </alternativeName>
    <alternativeName>
        <fullName evidence="1">Hemoglobin alpha chain</fullName>
    </alternativeName>
</protein>
<name>HBA_LYCRE</name>
<dbReference type="SMR" id="P86882"/>
<dbReference type="iPTMnet" id="P86882"/>
<dbReference type="GO" id="GO:0072562">
    <property type="term" value="C:blood microparticle"/>
    <property type="evidence" value="ECO:0007669"/>
    <property type="project" value="TreeGrafter"/>
</dbReference>
<dbReference type="GO" id="GO:0031838">
    <property type="term" value="C:haptoglobin-hemoglobin complex"/>
    <property type="evidence" value="ECO:0007669"/>
    <property type="project" value="TreeGrafter"/>
</dbReference>
<dbReference type="GO" id="GO:0005833">
    <property type="term" value="C:hemoglobin complex"/>
    <property type="evidence" value="ECO:0000250"/>
    <property type="project" value="UniProtKB"/>
</dbReference>
<dbReference type="GO" id="GO:0031720">
    <property type="term" value="F:haptoglobin binding"/>
    <property type="evidence" value="ECO:0007669"/>
    <property type="project" value="TreeGrafter"/>
</dbReference>
<dbReference type="GO" id="GO:0020037">
    <property type="term" value="F:heme binding"/>
    <property type="evidence" value="ECO:0007669"/>
    <property type="project" value="InterPro"/>
</dbReference>
<dbReference type="GO" id="GO:0005506">
    <property type="term" value="F:iron ion binding"/>
    <property type="evidence" value="ECO:0007669"/>
    <property type="project" value="InterPro"/>
</dbReference>
<dbReference type="GO" id="GO:0043177">
    <property type="term" value="F:organic acid binding"/>
    <property type="evidence" value="ECO:0007669"/>
    <property type="project" value="TreeGrafter"/>
</dbReference>
<dbReference type="GO" id="GO:0019825">
    <property type="term" value="F:oxygen binding"/>
    <property type="evidence" value="ECO:0007669"/>
    <property type="project" value="InterPro"/>
</dbReference>
<dbReference type="GO" id="GO:0005344">
    <property type="term" value="F:oxygen carrier activity"/>
    <property type="evidence" value="ECO:0000250"/>
    <property type="project" value="UniProtKB"/>
</dbReference>
<dbReference type="GO" id="GO:0004601">
    <property type="term" value="F:peroxidase activity"/>
    <property type="evidence" value="ECO:0007669"/>
    <property type="project" value="TreeGrafter"/>
</dbReference>
<dbReference type="GO" id="GO:0042744">
    <property type="term" value="P:hydrogen peroxide catabolic process"/>
    <property type="evidence" value="ECO:0007669"/>
    <property type="project" value="TreeGrafter"/>
</dbReference>
<dbReference type="GO" id="GO:0015671">
    <property type="term" value="P:oxygen transport"/>
    <property type="evidence" value="ECO:0000250"/>
    <property type="project" value="UniProtKB"/>
</dbReference>
<dbReference type="CDD" id="cd08927">
    <property type="entry name" value="Hb-alpha-like"/>
    <property type="match status" value="1"/>
</dbReference>
<dbReference type="FunFam" id="1.10.490.10:FF:000002">
    <property type="entry name" value="Hemoglobin subunit alpha"/>
    <property type="match status" value="1"/>
</dbReference>
<dbReference type="Gene3D" id="1.10.490.10">
    <property type="entry name" value="Globins"/>
    <property type="match status" value="1"/>
</dbReference>
<dbReference type="InterPro" id="IPR000971">
    <property type="entry name" value="Globin"/>
</dbReference>
<dbReference type="InterPro" id="IPR009050">
    <property type="entry name" value="Globin-like_sf"/>
</dbReference>
<dbReference type="InterPro" id="IPR012292">
    <property type="entry name" value="Globin/Proto"/>
</dbReference>
<dbReference type="InterPro" id="IPR002338">
    <property type="entry name" value="Hemoglobin_a-typ"/>
</dbReference>
<dbReference type="InterPro" id="IPR050056">
    <property type="entry name" value="Hemoglobin_oxygen_transport"/>
</dbReference>
<dbReference type="InterPro" id="IPR002339">
    <property type="entry name" value="Hemoglobin_pi"/>
</dbReference>
<dbReference type="PANTHER" id="PTHR11442">
    <property type="entry name" value="HEMOGLOBIN FAMILY MEMBER"/>
    <property type="match status" value="1"/>
</dbReference>
<dbReference type="PANTHER" id="PTHR11442:SF41">
    <property type="entry name" value="HEMOGLOBIN SUBUNIT ZETA"/>
    <property type="match status" value="1"/>
</dbReference>
<dbReference type="Pfam" id="PF00042">
    <property type="entry name" value="Globin"/>
    <property type="match status" value="1"/>
</dbReference>
<dbReference type="PRINTS" id="PR00612">
    <property type="entry name" value="ALPHAHAEM"/>
</dbReference>
<dbReference type="PRINTS" id="PR00815">
    <property type="entry name" value="PIHAEM"/>
</dbReference>
<dbReference type="SUPFAM" id="SSF46458">
    <property type="entry name" value="Globin-like"/>
    <property type="match status" value="1"/>
</dbReference>
<dbReference type="PROSITE" id="PS01033">
    <property type="entry name" value="GLOBIN"/>
    <property type="match status" value="1"/>
</dbReference>
<keyword id="KW-0007">Acetylation</keyword>
<keyword id="KW-0903">Direct protein sequencing</keyword>
<keyword id="KW-0349">Heme</keyword>
<keyword id="KW-0408">Iron</keyword>
<keyword id="KW-0479">Metal-binding</keyword>
<keyword id="KW-0561">Oxygen transport</keyword>
<keyword id="KW-0813">Transport</keyword>
<comment type="function">
    <text evidence="1 3">Involved in oxygen transport from gills to the various peripheral tissues.</text>
</comment>
<comment type="subunit">
    <text evidence="4">Heterotetramer of two alpha chains and two beta chains.</text>
</comment>
<comment type="tissue specificity">
    <text evidence="5">Red blood cells.</text>
</comment>
<comment type="mass spectrometry" mass="15663.3" error="0.3" method="MALDI" evidence="3"/>
<comment type="miscellaneous">
    <text evidence="3">This fish has just a single hemoglobin. It displays a weak Bohr effect that is not effector-enhanced and shows a propensity to form disulfide-linked polymers in vitro.</text>
</comment>
<comment type="similarity">
    <text evidence="2">Belongs to the globin family.</text>
</comment>
<proteinExistence type="evidence at protein level"/>